<dbReference type="EC" id="3.1.21.10" evidence="1"/>
<dbReference type="EMBL" id="CP000057">
    <property type="protein sequence ID" value="AAX87373.1"/>
    <property type="molecule type" value="Genomic_DNA"/>
</dbReference>
<dbReference type="RefSeq" id="WP_011271984.1">
    <property type="nucleotide sequence ID" value="NC_007146.2"/>
</dbReference>
<dbReference type="SMR" id="Q4QNM4"/>
<dbReference type="GeneID" id="93219264"/>
<dbReference type="KEGG" id="hit:NTHI0432"/>
<dbReference type="HOGENOM" id="CLU_091257_2_1_6"/>
<dbReference type="Proteomes" id="UP000002525">
    <property type="component" value="Chromosome"/>
</dbReference>
<dbReference type="GO" id="GO:0005737">
    <property type="term" value="C:cytoplasm"/>
    <property type="evidence" value="ECO:0007669"/>
    <property type="project" value="UniProtKB-SubCell"/>
</dbReference>
<dbReference type="GO" id="GO:0048476">
    <property type="term" value="C:Holliday junction resolvase complex"/>
    <property type="evidence" value="ECO:0007669"/>
    <property type="project" value="UniProtKB-UniRule"/>
</dbReference>
<dbReference type="GO" id="GO:0008821">
    <property type="term" value="F:crossover junction DNA endonuclease activity"/>
    <property type="evidence" value="ECO:0007669"/>
    <property type="project" value="UniProtKB-UniRule"/>
</dbReference>
<dbReference type="GO" id="GO:0003677">
    <property type="term" value="F:DNA binding"/>
    <property type="evidence" value="ECO:0007669"/>
    <property type="project" value="UniProtKB-KW"/>
</dbReference>
<dbReference type="GO" id="GO:0000287">
    <property type="term" value="F:magnesium ion binding"/>
    <property type="evidence" value="ECO:0007669"/>
    <property type="project" value="UniProtKB-UniRule"/>
</dbReference>
<dbReference type="GO" id="GO:0006310">
    <property type="term" value="P:DNA recombination"/>
    <property type="evidence" value="ECO:0007669"/>
    <property type="project" value="UniProtKB-UniRule"/>
</dbReference>
<dbReference type="GO" id="GO:0006281">
    <property type="term" value="P:DNA repair"/>
    <property type="evidence" value="ECO:0007669"/>
    <property type="project" value="UniProtKB-UniRule"/>
</dbReference>
<dbReference type="CDD" id="cd16962">
    <property type="entry name" value="RuvC"/>
    <property type="match status" value="1"/>
</dbReference>
<dbReference type="FunFam" id="3.30.420.10:FF:000002">
    <property type="entry name" value="Crossover junction endodeoxyribonuclease RuvC"/>
    <property type="match status" value="1"/>
</dbReference>
<dbReference type="Gene3D" id="3.30.420.10">
    <property type="entry name" value="Ribonuclease H-like superfamily/Ribonuclease H"/>
    <property type="match status" value="1"/>
</dbReference>
<dbReference type="HAMAP" id="MF_00034">
    <property type="entry name" value="RuvC"/>
    <property type="match status" value="1"/>
</dbReference>
<dbReference type="InterPro" id="IPR012337">
    <property type="entry name" value="RNaseH-like_sf"/>
</dbReference>
<dbReference type="InterPro" id="IPR036397">
    <property type="entry name" value="RNaseH_sf"/>
</dbReference>
<dbReference type="InterPro" id="IPR020563">
    <property type="entry name" value="X-over_junc_endoDNase_Mg_BS"/>
</dbReference>
<dbReference type="InterPro" id="IPR002176">
    <property type="entry name" value="X-over_junc_endoDNase_RuvC"/>
</dbReference>
<dbReference type="NCBIfam" id="TIGR00228">
    <property type="entry name" value="ruvC"/>
    <property type="match status" value="1"/>
</dbReference>
<dbReference type="PANTHER" id="PTHR30194">
    <property type="entry name" value="CROSSOVER JUNCTION ENDODEOXYRIBONUCLEASE RUVC"/>
    <property type="match status" value="1"/>
</dbReference>
<dbReference type="PANTHER" id="PTHR30194:SF3">
    <property type="entry name" value="CROSSOVER JUNCTION ENDODEOXYRIBONUCLEASE RUVC"/>
    <property type="match status" value="1"/>
</dbReference>
<dbReference type="Pfam" id="PF02075">
    <property type="entry name" value="RuvC"/>
    <property type="match status" value="1"/>
</dbReference>
<dbReference type="PRINTS" id="PR00696">
    <property type="entry name" value="RSOLVASERUVC"/>
</dbReference>
<dbReference type="SUPFAM" id="SSF53098">
    <property type="entry name" value="Ribonuclease H-like"/>
    <property type="match status" value="1"/>
</dbReference>
<dbReference type="PROSITE" id="PS01321">
    <property type="entry name" value="RUVC"/>
    <property type="match status" value="1"/>
</dbReference>
<accession>Q4QNM4</accession>
<evidence type="ECO:0000255" key="1">
    <source>
        <dbReference type="HAMAP-Rule" id="MF_00034"/>
    </source>
</evidence>
<sequence length="190" mass="20843">MSIILGIDPGSRVTGYGVIRQTGRHLEYLGSGAIRTQVEDLPTRLKRIYAGVTEIITQFQPNMFAIEQVFMAKNADSALKLGQARGTAIVAAVNNDLPVFEYAARLVKQTVVGIGSADKVQVQEMVTRILKLSDKPQADAADALAIAITHAHSIQHSLHIANSVKMTETQEKMTALLKTRYSRGRFRLKI</sequence>
<gene>
    <name evidence="1" type="primary">ruvC</name>
    <name type="ordered locus">NTHI0432</name>
</gene>
<comment type="function">
    <text evidence="1">The RuvA-RuvB-RuvC complex processes Holliday junction (HJ) DNA during genetic recombination and DNA repair. Endonuclease that resolves HJ intermediates. Cleaves cruciform DNA by making single-stranded nicks across the HJ at symmetrical positions within the homologous arms, yielding a 5'-phosphate and a 3'-hydroxyl group; requires a central core of homology in the junction. The consensus cleavage sequence is 5'-(A/T)TT(C/G)-3'. Cleavage occurs on the 3'-side of the TT dinucleotide at the point of strand exchange. HJ branch migration catalyzed by RuvA-RuvB allows RuvC to scan DNA until it finds its consensus sequence, where it cleaves and resolves the cruciform DNA.</text>
</comment>
<comment type="catalytic activity">
    <reaction evidence="1">
        <text>Endonucleolytic cleavage at a junction such as a reciprocal single-stranded crossover between two homologous DNA duplexes (Holliday junction).</text>
        <dbReference type="EC" id="3.1.21.10"/>
    </reaction>
</comment>
<comment type="cofactor">
    <cofactor evidence="1">
        <name>Mg(2+)</name>
        <dbReference type="ChEBI" id="CHEBI:18420"/>
    </cofactor>
    <text evidence="1">Binds 2 Mg(2+) ion per subunit.</text>
</comment>
<comment type="subunit">
    <text evidence="1">Homodimer which binds Holliday junction (HJ) DNA. The HJ becomes 2-fold symmetrical on binding to RuvC with unstacked arms; it has a different conformation from HJ DNA in complex with RuvA. In the full resolvosome a probable DNA-RuvA(4)-RuvB(12)-RuvC(2) complex forms which resolves the HJ.</text>
</comment>
<comment type="subcellular location">
    <subcellularLocation>
        <location evidence="1">Cytoplasm</location>
    </subcellularLocation>
</comment>
<comment type="similarity">
    <text evidence="1">Belongs to the RuvC family.</text>
</comment>
<reference key="1">
    <citation type="journal article" date="2005" name="J. Bacteriol.">
        <title>Genomic sequence of an otitis media isolate of nontypeable Haemophilus influenzae: comparative study with H. influenzae serotype d, strain KW20.</title>
        <authorList>
            <person name="Harrison A."/>
            <person name="Dyer D.W."/>
            <person name="Gillaspy A."/>
            <person name="Ray W.C."/>
            <person name="Mungur R."/>
            <person name="Carson M.B."/>
            <person name="Zhong H."/>
            <person name="Gipson J."/>
            <person name="Gipson M."/>
            <person name="Johnson L.S."/>
            <person name="Lewis L."/>
            <person name="Bakaletz L.O."/>
            <person name="Munson R.S. Jr."/>
        </authorList>
    </citation>
    <scope>NUCLEOTIDE SEQUENCE [LARGE SCALE GENOMIC DNA]</scope>
    <source>
        <strain>86-028NP</strain>
    </source>
</reference>
<feature type="chain" id="PRO_0000183103" description="Crossover junction endodeoxyribonuclease RuvC">
    <location>
        <begin position="1"/>
        <end position="190"/>
    </location>
</feature>
<feature type="active site" evidence="1">
    <location>
        <position position="8"/>
    </location>
</feature>
<feature type="active site" evidence="1">
    <location>
        <position position="67"/>
    </location>
</feature>
<feature type="active site" evidence="1">
    <location>
        <position position="139"/>
    </location>
</feature>
<feature type="binding site" evidence="1">
    <location>
        <position position="8"/>
    </location>
    <ligand>
        <name>Mg(2+)</name>
        <dbReference type="ChEBI" id="CHEBI:18420"/>
        <label>1</label>
    </ligand>
</feature>
<feature type="binding site" evidence="1">
    <location>
        <position position="67"/>
    </location>
    <ligand>
        <name>Mg(2+)</name>
        <dbReference type="ChEBI" id="CHEBI:18420"/>
        <label>2</label>
    </ligand>
</feature>
<feature type="binding site" evidence="1">
    <location>
        <position position="139"/>
    </location>
    <ligand>
        <name>Mg(2+)</name>
        <dbReference type="ChEBI" id="CHEBI:18420"/>
        <label>1</label>
    </ligand>
</feature>
<organism>
    <name type="scientific">Haemophilus influenzae (strain 86-028NP)</name>
    <dbReference type="NCBI Taxonomy" id="281310"/>
    <lineage>
        <taxon>Bacteria</taxon>
        <taxon>Pseudomonadati</taxon>
        <taxon>Pseudomonadota</taxon>
        <taxon>Gammaproteobacteria</taxon>
        <taxon>Pasteurellales</taxon>
        <taxon>Pasteurellaceae</taxon>
        <taxon>Haemophilus</taxon>
    </lineage>
</organism>
<protein>
    <recommendedName>
        <fullName evidence="1">Crossover junction endodeoxyribonuclease RuvC</fullName>
        <ecNumber evidence="1">3.1.21.10</ecNumber>
    </recommendedName>
    <alternativeName>
        <fullName evidence="1">Holliday junction nuclease RuvC</fullName>
    </alternativeName>
    <alternativeName>
        <fullName evidence="1">Holliday junction resolvase RuvC</fullName>
    </alternativeName>
</protein>
<proteinExistence type="inferred from homology"/>
<name>RUVC_HAEI8</name>
<keyword id="KW-0963">Cytoplasm</keyword>
<keyword id="KW-0227">DNA damage</keyword>
<keyword id="KW-0233">DNA recombination</keyword>
<keyword id="KW-0234">DNA repair</keyword>
<keyword id="KW-0238">DNA-binding</keyword>
<keyword id="KW-0255">Endonuclease</keyword>
<keyword id="KW-0378">Hydrolase</keyword>
<keyword id="KW-0460">Magnesium</keyword>
<keyword id="KW-0479">Metal-binding</keyword>
<keyword id="KW-0540">Nuclease</keyword>